<comment type="function">
    <text evidence="1">Topoisomerase IV is essential for chromosome segregation. It relaxes supercoiled DNA. Performs the decatenation events required during the replication of a circular DNA molecule.</text>
</comment>
<comment type="catalytic activity">
    <reaction evidence="1">
        <text>ATP-dependent breakage, passage and rejoining of double-stranded DNA.</text>
        <dbReference type="EC" id="5.6.2.2"/>
    </reaction>
</comment>
<comment type="cofactor">
    <cofactor evidence="1">
        <name>Mg(2+)</name>
        <dbReference type="ChEBI" id="CHEBI:18420"/>
    </cofactor>
    <cofactor evidence="1">
        <name>Mn(2+)</name>
        <dbReference type="ChEBI" id="CHEBI:29035"/>
    </cofactor>
    <cofactor evidence="1">
        <name>Ca(2+)</name>
        <dbReference type="ChEBI" id="CHEBI:29108"/>
    </cofactor>
    <text evidence="1">Binds two Mg(2+) per subunit. The magnesium ions form salt bridges with both the protein and the DNA. Can also accept other divalent metal cations, such as Mn(2+) or Ca(2+).</text>
</comment>
<comment type="subunit">
    <text evidence="1">Heterotetramer composed of ParC and ParE.</text>
</comment>
<comment type="similarity">
    <text evidence="1">Belongs to the type II topoisomerase family. ParE type 1 subfamily.</text>
</comment>
<feature type="chain" id="PRO_0000145428" description="DNA topoisomerase 4 subunit B">
    <location>
        <begin position="1"/>
        <end position="630"/>
    </location>
</feature>
<feature type="domain" description="Toprim" evidence="1">
    <location>
        <begin position="412"/>
        <end position="525"/>
    </location>
</feature>
<feature type="binding site" evidence="1">
    <location>
        <position position="5"/>
    </location>
    <ligand>
        <name>ATP</name>
        <dbReference type="ChEBI" id="CHEBI:30616"/>
    </ligand>
</feature>
<feature type="binding site" evidence="1">
    <location>
        <position position="42"/>
    </location>
    <ligand>
        <name>ATP</name>
        <dbReference type="ChEBI" id="CHEBI:30616"/>
    </ligand>
</feature>
<feature type="binding site" evidence="1">
    <location>
        <position position="69"/>
    </location>
    <ligand>
        <name>ATP</name>
        <dbReference type="ChEBI" id="CHEBI:30616"/>
    </ligand>
</feature>
<feature type="binding site" evidence="1">
    <location>
        <begin position="110"/>
        <end position="116"/>
    </location>
    <ligand>
        <name>ATP</name>
        <dbReference type="ChEBI" id="CHEBI:30616"/>
    </ligand>
</feature>
<feature type="binding site" evidence="1">
    <location>
        <position position="334"/>
    </location>
    <ligand>
        <name>ATP</name>
        <dbReference type="ChEBI" id="CHEBI:30616"/>
    </ligand>
</feature>
<feature type="binding site" evidence="1">
    <location>
        <position position="418"/>
    </location>
    <ligand>
        <name>Mg(2+)</name>
        <dbReference type="ChEBI" id="CHEBI:18420"/>
        <label>1</label>
        <note>catalytic</note>
    </ligand>
</feature>
<feature type="binding site" evidence="1">
    <location>
        <position position="490"/>
    </location>
    <ligand>
        <name>Mg(2+)</name>
        <dbReference type="ChEBI" id="CHEBI:18420"/>
        <label>1</label>
        <note>catalytic</note>
    </ligand>
</feature>
<feature type="binding site" evidence="1">
    <location>
        <position position="490"/>
    </location>
    <ligand>
        <name>Mg(2+)</name>
        <dbReference type="ChEBI" id="CHEBI:18420"/>
        <label>2</label>
    </ligand>
</feature>
<feature type="binding site" evidence="1">
    <location>
        <position position="492"/>
    </location>
    <ligand>
        <name>Mg(2+)</name>
        <dbReference type="ChEBI" id="CHEBI:18420"/>
        <label>2</label>
    </ligand>
</feature>
<feature type="site" description="Interaction with DNA" evidence="1">
    <location>
        <position position="443"/>
    </location>
</feature>
<feature type="site" description="Interaction with DNA" evidence="1">
    <location>
        <position position="446"/>
    </location>
</feature>
<feature type="site" description="Interaction with DNA" evidence="1">
    <location>
        <position position="497"/>
    </location>
</feature>
<feature type="site" description="Interaction with DNA" evidence="1">
    <location>
        <position position="615"/>
    </location>
</feature>
<gene>
    <name evidence="1" type="primary">parE</name>
    <name type="ordered locus">STY3359</name>
    <name type="ordered locus">t3102</name>
</gene>
<accession>P0A2I6</accession>
<accession>P31598</accession>
<sequence length="630" mass="70089">MTQTYNADAIEVLTGLEPVRRRPGMYTDTTRPNHLGQEVIDNSVDEALAGHAKRVDVILHADQSLEVIDDGRGMPVDIHPEEGVPAVELILCRLHAGGKFSNKNYQFSGGLHGVGISVVNALSKRVEVTVRRDGQVYNIAFENGEKVQDLQVVGTCGKRNTGTSVHFWPDESFFDSPRFSVSRLMHVLKAKAVLCPGVEITFKDEVNNSEQRWCYQDGLNDYLGEAVNGLPTLPEKPFIGNFNGETEAVDWALLWLPEGGELLTESYVNLIPTMQGGTHVNGLRQGLLDAMREFCEYRNILPRGVKLSAEDIWDRCAYVLSVKMQDPQFAGQTKERLSSRQCAAFVSGVVKDAFSLWLNQNVQAAEQLAEMAIASAQRRLRAAKKVVRKKLTSGPALPGKLADCTAQDLNRTELFLVEGDSAGGSAKQARDREYQAIMPLKGKILNTWEVSSDEVLASQEVHDISVAIGIDPDSDDLSQLRYGKICILADADSDGLHIATLLCALFVRHFRALVKNGHVYVALPPLYRIDLGKEVYYALTEEEKAGVLEQLKRKKGKPNVQRFKGLGEMNPMQLRETTLDPNTRRLVQLTISDEDDQRTNAMMDMLLAKKRSEDRRNWLQEKGDLADLDV</sequence>
<protein>
    <recommendedName>
        <fullName evidence="1">DNA topoisomerase 4 subunit B</fullName>
        <ecNumber evidence="1">5.6.2.2</ecNumber>
    </recommendedName>
    <alternativeName>
        <fullName evidence="1">Topoisomerase IV subunit B</fullName>
    </alternativeName>
</protein>
<evidence type="ECO:0000255" key="1">
    <source>
        <dbReference type="HAMAP-Rule" id="MF_00938"/>
    </source>
</evidence>
<reference key="1">
    <citation type="journal article" date="2001" name="Nature">
        <title>Complete genome sequence of a multiple drug resistant Salmonella enterica serovar Typhi CT18.</title>
        <authorList>
            <person name="Parkhill J."/>
            <person name="Dougan G."/>
            <person name="James K.D."/>
            <person name="Thomson N.R."/>
            <person name="Pickard D."/>
            <person name="Wain J."/>
            <person name="Churcher C.M."/>
            <person name="Mungall K.L."/>
            <person name="Bentley S.D."/>
            <person name="Holden M.T.G."/>
            <person name="Sebaihia M."/>
            <person name="Baker S."/>
            <person name="Basham D."/>
            <person name="Brooks K."/>
            <person name="Chillingworth T."/>
            <person name="Connerton P."/>
            <person name="Cronin A."/>
            <person name="Davis P."/>
            <person name="Davies R.M."/>
            <person name="Dowd L."/>
            <person name="White N."/>
            <person name="Farrar J."/>
            <person name="Feltwell T."/>
            <person name="Hamlin N."/>
            <person name="Haque A."/>
            <person name="Hien T.T."/>
            <person name="Holroyd S."/>
            <person name="Jagels K."/>
            <person name="Krogh A."/>
            <person name="Larsen T.S."/>
            <person name="Leather S."/>
            <person name="Moule S."/>
            <person name="O'Gaora P."/>
            <person name="Parry C."/>
            <person name="Quail M.A."/>
            <person name="Rutherford K.M."/>
            <person name="Simmonds M."/>
            <person name="Skelton J."/>
            <person name="Stevens K."/>
            <person name="Whitehead S."/>
            <person name="Barrell B.G."/>
        </authorList>
    </citation>
    <scope>NUCLEOTIDE SEQUENCE [LARGE SCALE GENOMIC DNA]</scope>
    <source>
        <strain>CT18</strain>
    </source>
</reference>
<reference key="2">
    <citation type="journal article" date="2003" name="J. Bacteriol.">
        <title>Comparative genomics of Salmonella enterica serovar Typhi strains Ty2 and CT18.</title>
        <authorList>
            <person name="Deng W."/>
            <person name="Liou S.-R."/>
            <person name="Plunkett G. III"/>
            <person name="Mayhew G.F."/>
            <person name="Rose D.J."/>
            <person name="Burland V."/>
            <person name="Kodoyianni V."/>
            <person name="Schwartz D.C."/>
            <person name="Blattner F.R."/>
        </authorList>
    </citation>
    <scope>NUCLEOTIDE SEQUENCE [LARGE SCALE GENOMIC DNA]</scope>
    <source>
        <strain>ATCC 700931 / Ty2</strain>
    </source>
</reference>
<organism>
    <name type="scientific">Salmonella typhi</name>
    <dbReference type="NCBI Taxonomy" id="90370"/>
    <lineage>
        <taxon>Bacteria</taxon>
        <taxon>Pseudomonadati</taxon>
        <taxon>Pseudomonadota</taxon>
        <taxon>Gammaproteobacteria</taxon>
        <taxon>Enterobacterales</taxon>
        <taxon>Enterobacteriaceae</taxon>
        <taxon>Salmonella</taxon>
    </lineage>
</organism>
<proteinExistence type="inferred from homology"/>
<name>PARE_SALTI</name>
<dbReference type="EC" id="5.6.2.2" evidence="1"/>
<dbReference type="EMBL" id="AL513382">
    <property type="protein sequence ID" value="CAD03013.1"/>
    <property type="molecule type" value="Genomic_DNA"/>
</dbReference>
<dbReference type="EMBL" id="AE014613">
    <property type="protein sequence ID" value="AAO70645.1"/>
    <property type="molecule type" value="Genomic_DNA"/>
</dbReference>
<dbReference type="RefSeq" id="NP_457573.1">
    <property type="nucleotide sequence ID" value="NC_003198.1"/>
</dbReference>
<dbReference type="RefSeq" id="WP_000195318.1">
    <property type="nucleotide sequence ID" value="NZ_WSUR01000003.1"/>
</dbReference>
<dbReference type="SMR" id="P0A2I6"/>
<dbReference type="STRING" id="220341.gene:17587216"/>
<dbReference type="KEGG" id="stt:t3102"/>
<dbReference type="KEGG" id="sty:STY3359"/>
<dbReference type="PATRIC" id="fig|220341.7.peg.3420"/>
<dbReference type="eggNOG" id="COG0187">
    <property type="taxonomic scope" value="Bacteria"/>
</dbReference>
<dbReference type="HOGENOM" id="CLU_006146_1_0_6"/>
<dbReference type="OMA" id="FRFIMER"/>
<dbReference type="OrthoDB" id="9802808at2"/>
<dbReference type="Proteomes" id="UP000000541">
    <property type="component" value="Chromosome"/>
</dbReference>
<dbReference type="Proteomes" id="UP000002670">
    <property type="component" value="Chromosome"/>
</dbReference>
<dbReference type="GO" id="GO:0005694">
    <property type="term" value="C:chromosome"/>
    <property type="evidence" value="ECO:0007669"/>
    <property type="project" value="InterPro"/>
</dbReference>
<dbReference type="GO" id="GO:0005524">
    <property type="term" value="F:ATP binding"/>
    <property type="evidence" value="ECO:0007669"/>
    <property type="project" value="UniProtKB-UniRule"/>
</dbReference>
<dbReference type="GO" id="GO:0003677">
    <property type="term" value="F:DNA binding"/>
    <property type="evidence" value="ECO:0007669"/>
    <property type="project" value="UniProtKB-UniRule"/>
</dbReference>
<dbReference type="GO" id="GO:0003918">
    <property type="term" value="F:DNA topoisomerase type II (double strand cut, ATP-hydrolyzing) activity"/>
    <property type="evidence" value="ECO:0007669"/>
    <property type="project" value="UniProtKB-UniRule"/>
</dbReference>
<dbReference type="GO" id="GO:0046872">
    <property type="term" value="F:metal ion binding"/>
    <property type="evidence" value="ECO:0007669"/>
    <property type="project" value="UniProtKB-KW"/>
</dbReference>
<dbReference type="GO" id="GO:0007059">
    <property type="term" value="P:chromosome segregation"/>
    <property type="evidence" value="ECO:0007669"/>
    <property type="project" value="UniProtKB-UniRule"/>
</dbReference>
<dbReference type="GO" id="GO:0006265">
    <property type="term" value="P:DNA topological change"/>
    <property type="evidence" value="ECO:0007669"/>
    <property type="project" value="UniProtKB-UniRule"/>
</dbReference>
<dbReference type="CDD" id="cd16928">
    <property type="entry name" value="HATPase_GyrB-like"/>
    <property type="match status" value="1"/>
</dbReference>
<dbReference type="CDD" id="cd00822">
    <property type="entry name" value="TopoII_Trans_DNA_gyrase"/>
    <property type="match status" value="1"/>
</dbReference>
<dbReference type="FunFam" id="3.30.565.10:FF:000002">
    <property type="entry name" value="DNA gyrase subunit B"/>
    <property type="match status" value="1"/>
</dbReference>
<dbReference type="FunFam" id="3.30.230.10:FF:000012">
    <property type="entry name" value="DNA topoisomerase 4 subunit B"/>
    <property type="match status" value="1"/>
</dbReference>
<dbReference type="FunFam" id="3.40.50.670:FF:000003">
    <property type="entry name" value="DNA topoisomerase 4 subunit B"/>
    <property type="match status" value="1"/>
</dbReference>
<dbReference type="Gene3D" id="3.30.230.10">
    <property type="match status" value="1"/>
</dbReference>
<dbReference type="Gene3D" id="3.40.50.670">
    <property type="match status" value="1"/>
</dbReference>
<dbReference type="Gene3D" id="3.30.565.10">
    <property type="entry name" value="Histidine kinase-like ATPase, C-terminal domain"/>
    <property type="match status" value="1"/>
</dbReference>
<dbReference type="HAMAP" id="MF_00938">
    <property type="entry name" value="ParE_type1"/>
    <property type="match status" value="1"/>
</dbReference>
<dbReference type="InterPro" id="IPR002288">
    <property type="entry name" value="DNA_gyrase_B_C"/>
</dbReference>
<dbReference type="InterPro" id="IPR036890">
    <property type="entry name" value="HATPase_C_sf"/>
</dbReference>
<dbReference type="InterPro" id="IPR020568">
    <property type="entry name" value="Ribosomal_Su5_D2-typ_SF"/>
</dbReference>
<dbReference type="InterPro" id="IPR014721">
    <property type="entry name" value="Ribsml_uS5_D2-typ_fold_subgr"/>
</dbReference>
<dbReference type="InterPro" id="IPR001241">
    <property type="entry name" value="Topo_IIA"/>
</dbReference>
<dbReference type="InterPro" id="IPR013760">
    <property type="entry name" value="Topo_IIA-like_dom_sf"/>
</dbReference>
<dbReference type="InterPro" id="IPR013759">
    <property type="entry name" value="Topo_IIA_B_C"/>
</dbReference>
<dbReference type="InterPro" id="IPR013506">
    <property type="entry name" value="Topo_IIA_bsu_dom2"/>
</dbReference>
<dbReference type="InterPro" id="IPR018522">
    <property type="entry name" value="TopoIIA_CS"/>
</dbReference>
<dbReference type="InterPro" id="IPR005737">
    <property type="entry name" value="TopoIV_B_Gneg"/>
</dbReference>
<dbReference type="InterPro" id="IPR006171">
    <property type="entry name" value="TOPRIM_dom"/>
</dbReference>
<dbReference type="NCBIfam" id="TIGR01055">
    <property type="entry name" value="parE_Gneg"/>
    <property type="match status" value="1"/>
</dbReference>
<dbReference type="PANTHER" id="PTHR45866">
    <property type="entry name" value="DNA GYRASE/TOPOISOMERASE SUBUNIT B"/>
    <property type="match status" value="1"/>
</dbReference>
<dbReference type="PANTHER" id="PTHR45866:SF4">
    <property type="entry name" value="DNA TOPOISOMERASE 4 SUBUNIT B"/>
    <property type="match status" value="1"/>
</dbReference>
<dbReference type="Pfam" id="PF00204">
    <property type="entry name" value="DNA_gyraseB"/>
    <property type="match status" value="1"/>
</dbReference>
<dbReference type="Pfam" id="PF00986">
    <property type="entry name" value="DNA_gyraseB_C"/>
    <property type="match status" value="1"/>
</dbReference>
<dbReference type="Pfam" id="PF02518">
    <property type="entry name" value="HATPase_c"/>
    <property type="match status" value="1"/>
</dbReference>
<dbReference type="Pfam" id="PF01751">
    <property type="entry name" value="Toprim"/>
    <property type="match status" value="1"/>
</dbReference>
<dbReference type="PRINTS" id="PR01098">
    <property type="entry name" value="TOPISMRASE4B"/>
</dbReference>
<dbReference type="PRINTS" id="PR00418">
    <property type="entry name" value="TPI2FAMILY"/>
</dbReference>
<dbReference type="SMART" id="SM00387">
    <property type="entry name" value="HATPase_c"/>
    <property type="match status" value="1"/>
</dbReference>
<dbReference type="SMART" id="SM00433">
    <property type="entry name" value="TOP2c"/>
    <property type="match status" value="1"/>
</dbReference>
<dbReference type="SUPFAM" id="SSF55874">
    <property type="entry name" value="ATPase domain of HSP90 chaperone/DNA topoisomerase II/histidine kinase"/>
    <property type="match status" value="1"/>
</dbReference>
<dbReference type="SUPFAM" id="SSF54211">
    <property type="entry name" value="Ribosomal protein S5 domain 2-like"/>
    <property type="match status" value="1"/>
</dbReference>
<dbReference type="SUPFAM" id="SSF56719">
    <property type="entry name" value="Type II DNA topoisomerase"/>
    <property type="match status" value="1"/>
</dbReference>
<dbReference type="PROSITE" id="PS00177">
    <property type="entry name" value="TOPOISOMERASE_II"/>
    <property type="match status" value="1"/>
</dbReference>
<dbReference type="PROSITE" id="PS50880">
    <property type="entry name" value="TOPRIM"/>
    <property type="match status" value="1"/>
</dbReference>
<keyword id="KW-0067">ATP-binding</keyword>
<keyword id="KW-0238">DNA-binding</keyword>
<keyword id="KW-0413">Isomerase</keyword>
<keyword id="KW-0460">Magnesium</keyword>
<keyword id="KW-0479">Metal-binding</keyword>
<keyword id="KW-0547">Nucleotide-binding</keyword>
<keyword id="KW-0799">Topoisomerase</keyword>